<reference key="1">
    <citation type="journal article" date="2007" name="J. Bacteriol.">
        <title>Genome of the opportunistic pathogen Streptococcus sanguinis.</title>
        <authorList>
            <person name="Xu P."/>
            <person name="Alves J.M."/>
            <person name="Kitten T."/>
            <person name="Brown A."/>
            <person name="Chen Z."/>
            <person name="Ozaki L.S."/>
            <person name="Manque P."/>
            <person name="Ge X."/>
            <person name="Serrano M.G."/>
            <person name="Puiu D."/>
            <person name="Hendricks S."/>
            <person name="Wang Y."/>
            <person name="Chaplin M.D."/>
            <person name="Akan D."/>
            <person name="Paik S."/>
            <person name="Peterson D.L."/>
            <person name="Macrina F.L."/>
            <person name="Buck G.A."/>
        </authorList>
    </citation>
    <scope>NUCLEOTIDE SEQUENCE [LARGE SCALE GENOMIC DNA]</scope>
    <source>
        <strain>SK36</strain>
    </source>
</reference>
<dbReference type="EC" id="6.3.4.2" evidence="1"/>
<dbReference type="EMBL" id="CP000387">
    <property type="protein sequence ID" value="ABN45365.1"/>
    <property type="molecule type" value="Genomic_DNA"/>
</dbReference>
<dbReference type="RefSeq" id="WP_011837482.1">
    <property type="nucleotide sequence ID" value="NC_009009.1"/>
</dbReference>
<dbReference type="RefSeq" id="YP_001035915.1">
    <property type="nucleotide sequence ID" value="NC_009009.1"/>
</dbReference>
<dbReference type="SMR" id="A3CQB0"/>
<dbReference type="STRING" id="388919.SSA_1994"/>
<dbReference type="KEGG" id="ssa:SSA_1994"/>
<dbReference type="PATRIC" id="fig|388919.9.peg.1890"/>
<dbReference type="eggNOG" id="COG0504">
    <property type="taxonomic scope" value="Bacteria"/>
</dbReference>
<dbReference type="HOGENOM" id="CLU_011675_5_0_9"/>
<dbReference type="OrthoDB" id="9801107at2"/>
<dbReference type="UniPathway" id="UPA00159">
    <property type="reaction ID" value="UER00277"/>
</dbReference>
<dbReference type="Proteomes" id="UP000002148">
    <property type="component" value="Chromosome"/>
</dbReference>
<dbReference type="GO" id="GO:0005829">
    <property type="term" value="C:cytosol"/>
    <property type="evidence" value="ECO:0007669"/>
    <property type="project" value="TreeGrafter"/>
</dbReference>
<dbReference type="GO" id="GO:0005524">
    <property type="term" value="F:ATP binding"/>
    <property type="evidence" value="ECO:0007669"/>
    <property type="project" value="UniProtKB-KW"/>
</dbReference>
<dbReference type="GO" id="GO:0003883">
    <property type="term" value="F:CTP synthase activity"/>
    <property type="evidence" value="ECO:0007669"/>
    <property type="project" value="UniProtKB-UniRule"/>
</dbReference>
<dbReference type="GO" id="GO:0004359">
    <property type="term" value="F:glutaminase activity"/>
    <property type="evidence" value="ECO:0007669"/>
    <property type="project" value="RHEA"/>
</dbReference>
<dbReference type="GO" id="GO:0042802">
    <property type="term" value="F:identical protein binding"/>
    <property type="evidence" value="ECO:0007669"/>
    <property type="project" value="TreeGrafter"/>
</dbReference>
<dbReference type="GO" id="GO:0046872">
    <property type="term" value="F:metal ion binding"/>
    <property type="evidence" value="ECO:0007669"/>
    <property type="project" value="UniProtKB-KW"/>
</dbReference>
<dbReference type="GO" id="GO:0044210">
    <property type="term" value="P:'de novo' CTP biosynthetic process"/>
    <property type="evidence" value="ECO:0007669"/>
    <property type="project" value="UniProtKB-UniRule"/>
</dbReference>
<dbReference type="GO" id="GO:0019856">
    <property type="term" value="P:pyrimidine nucleobase biosynthetic process"/>
    <property type="evidence" value="ECO:0007669"/>
    <property type="project" value="TreeGrafter"/>
</dbReference>
<dbReference type="CDD" id="cd03113">
    <property type="entry name" value="CTPS_N"/>
    <property type="match status" value="1"/>
</dbReference>
<dbReference type="CDD" id="cd01746">
    <property type="entry name" value="GATase1_CTP_Synthase"/>
    <property type="match status" value="1"/>
</dbReference>
<dbReference type="FunFam" id="3.40.50.300:FF:000009">
    <property type="entry name" value="CTP synthase"/>
    <property type="match status" value="1"/>
</dbReference>
<dbReference type="FunFam" id="3.40.50.880:FF:000002">
    <property type="entry name" value="CTP synthase"/>
    <property type="match status" value="1"/>
</dbReference>
<dbReference type="Gene3D" id="3.40.50.880">
    <property type="match status" value="1"/>
</dbReference>
<dbReference type="Gene3D" id="3.40.50.300">
    <property type="entry name" value="P-loop containing nucleotide triphosphate hydrolases"/>
    <property type="match status" value="1"/>
</dbReference>
<dbReference type="HAMAP" id="MF_01227">
    <property type="entry name" value="PyrG"/>
    <property type="match status" value="1"/>
</dbReference>
<dbReference type="InterPro" id="IPR029062">
    <property type="entry name" value="Class_I_gatase-like"/>
</dbReference>
<dbReference type="InterPro" id="IPR004468">
    <property type="entry name" value="CTP_synthase"/>
</dbReference>
<dbReference type="InterPro" id="IPR017456">
    <property type="entry name" value="CTP_synthase_N"/>
</dbReference>
<dbReference type="InterPro" id="IPR017926">
    <property type="entry name" value="GATASE"/>
</dbReference>
<dbReference type="InterPro" id="IPR033828">
    <property type="entry name" value="GATase1_CTP_Synthase"/>
</dbReference>
<dbReference type="InterPro" id="IPR027417">
    <property type="entry name" value="P-loop_NTPase"/>
</dbReference>
<dbReference type="NCBIfam" id="NF003792">
    <property type="entry name" value="PRK05380.1"/>
    <property type="match status" value="1"/>
</dbReference>
<dbReference type="NCBIfam" id="TIGR00337">
    <property type="entry name" value="PyrG"/>
    <property type="match status" value="1"/>
</dbReference>
<dbReference type="PANTHER" id="PTHR11550">
    <property type="entry name" value="CTP SYNTHASE"/>
    <property type="match status" value="1"/>
</dbReference>
<dbReference type="PANTHER" id="PTHR11550:SF0">
    <property type="entry name" value="CTP SYNTHASE-RELATED"/>
    <property type="match status" value="1"/>
</dbReference>
<dbReference type="Pfam" id="PF06418">
    <property type="entry name" value="CTP_synth_N"/>
    <property type="match status" value="1"/>
</dbReference>
<dbReference type="Pfam" id="PF00117">
    <property type="entry name" value="GATase"/>
    <property type="match status" value="1"/>
</dbReference>
<dbReference type="SUPFAM" id="SSF52317">
    <property type="entry name" value="Class I glutamine amidotransferase-like"/>
    <property type="match status" value="1"/>
</dbReference>
<dbReference type="SUPFAM" id="SSF52540">
    <property type="entry name" value="P-loop containing nucleoside triphosphate hydrolases"/>
    <property type="match status" value="1"/>
</dbReference>
<dbReference type="PROSITE" id="PS51273">
    <property type="entry name" value="GATASE_TYPE_1"/>
    <property type="match status" value="1"/>
</dbReference>
<proteinExistence type="inferred from homology"/>
<accession>A3CQB0</accession>
<gene>
    <name evidence="1" type="primary">pyrG</name>
    <name type="ordered locus">SSA_1994</name>
</gene>
<sequence>MSTKYIFVTGGVVSSIGKGIVAASLGRLLKNRGLKVTIQKFDPYINIDPGTMSPYQHGEVFVTDDGAETDLDLGHYERFIDINLNKYSNVTTGKIYSEVLRKERKGEYLGATVQVIPHITDALKDKIKRAARTTDSDVIITEVGGTVGDIESLPFLEALRQMKADVGADNVMYIHTTLLPYLKAAGEMKTKPTQHSVKELRGLGIQPNMLVIRTEKPAGQNIKNKLAQFCDVAPEAVIESLDVEHLYQIPLDLQAQKMDQIVCDHLKLDVPAADMTEWSAMVEKVMSLEKQVRIALVGKYVELPDAYISVVEALKHAGYANDAEVKIDWIDANQVTVENAAELLGSADGIIVPGGFGQRGTEGKIQTIRYAREQDVPMLGVCLGMQLTCVEFARHVLGLADANSAELNPDTPFPIIDLMRDQIDVEDLGGTLRLGLYPSKLKSGSKAAAAYDHQEVVQRRHRHRYEFNNAFREQFEAAGFVFSGVSPDNRLVEIVEIPENKFFVACQYHPELSSRPNRPEGLYTAFVTAAVEKSSDR</sequence>
<comment type="function">
    <text evidence="1">Catalyzes the ATP-dependent amination of UTP to CTP with either L-glutamine or ammonia as the source of nitrogen. Regulates intracellular CTP levels through interactions with the four ribonucleotide triphosphates.</text>
</comment>
<comment type="catalytic activity">
    <reaction evidence="1">
        <text>UTP + L-glutamine + ATP + H2O = CTP + L-glutamate + ADP + phosphate + 2 H(+)</text>
        <dbReference type="Rhea" id="RHEA:26426"/>
        <dbReference type="ChEBI" id="CHEBI:15377"/>
        <dbReference type="ChEBI" id="CHEBI:15378"/>
        <dbReference type="ChEBI" id="CHEBI:29985"/>
        <dbReference type="ChEBI" id="CHEBI:30616"/>
        <dbReference type="ChEBI" id="CHEBI:37563"/>
        <dbReference type="ChEBI" id="CHEBI:43474"/>
        <dbReference type="ChEBI" id="CHEBI:46398"/>
        <dbReference type="ChEBI" id="CHEBI:58359"/>
        <dbReference type="ChEBI" id="CHEBI:456216"/>
        <dbReference type="EC" id="6.3.4.2"/>
    </reaction>
</comment>
<comment type="catalytic activity">
    <reaction evidence="1">
        <text>L-glutamine + H2O = L-glutamate + NH4(+)</text>
        <dbReference type="Rhea" id="RHEA:15889"/>
        <dbReference type="ChEBI" id="CHEBI:15377"/>
        <dbReference type="ChEBI" id="CHEBI:28938"/>
        <dbReference type="ChEBI" id="CHEBI:29985"/>
        <dbReference type="ChEBI" id="CHEBI:58359"/>
    </reaction>
</comment>
<comment type="catalytic activity">
    <reaction evidence="1">
        <text>UTP + NH4(+) + ATP = CTP + ADP + phosphate + 2 H(+)</text>
        <dbReference type="Rhea" id="RHEA:16597"/>
        <dbReference type="ChEBI" id="CHEBI:15378"/>
        <dbReference type="ChEBI" id="CHEBI:28938"/>
        <dbReference type="ChEBI" id="CHEBI:30616"/>
        <dbReference type="ChEBI" id="CHEBI:37563"/>
        <dbReference type="ChEBI" id="CHEBI:43474"/>
        <dbReference type="ChEBI" id="CHEBI:46398"/>
        <dbReference type="ChEBI" id="CHEBI:456216"/>
    </reaction>
</comment>
<comment type="activity regulation">
    <text evidence="1">Allosterically activated by GTP, when glutamine is the substrate; GTP has no effect on the reaction when ammonia is the substrate. The allosteric effector GTP functions by stabilizing the protein conformation that binds the tetrahedral intermediate(s) formed during glutamine hydrolysis. Inhibited by the product CTP, via allosteric rather than competitive inhibition.</text>
</comment>
<comment type="pathway">
    <text evidence="1">Pyrimidine metabolism; CTP biosynthesis via de novo pathway; CTP from UDP: step 2/2.</text>
</comment>
<comment type="subunit">
    <text evidence="1">Homotetramer.</text>
</comment>
<comment type="miscellaneous">
    <text evidence="1">CTPSs have evolved a hybrid strategy for distinguishing between UTP and CTP. The overlapping regions of the product feedback inhibitory and substrate sites recognize a common feature in both compounds, the triphosphate moiety. To differentiate isosteric substrate and product pyrimidine rings, an additional pocket far from the expected kinase/ligase catalytic site, specifically recognizes the cytosine and ribose portions of the product inhibitor.</text>
</comment>
<comment type="similarity">
    <text evidence="1">Belongs to the CTP synthase family.</text>
</comment>
<name>PYRG_STRSV</name>
<keyword id="KW-0067">ATP-binding</keyword>
<keyword id="KW-0315">Glutamine amidotransferase</keyword>
<keyword id="KW-0436">Ligase</keyword>
<keyword id="KW-0460">Magnesium</keyword>
<keyword id="KW-0479">Metal-binding</keyword>
<keyword id="KW-0547">Nucleotide-binding</keyword>
<keyword id="KW-0665">Pyrimidine biosynthesis</keyword>
<keyword id="KW-1185">Reference proteome</keyword>
<feature type="chain" id="PRO_1000139592" description="CTP synthase">
    <location>
        <begin position="1"/>
        <end position="537"/>
    </location>
</feature>
<feature type="domain" description="Glutamine amidotransferase type-1" evidence="1">
    <location>
        <begin position="293"/>
        <end position="536"/>
    </location>
</feature>
<feature type="region of interest" description="Amidoligase domain" evidence="1">
    <location>
        <begin position="1"/>
        <end position="268"/>
    </location>
</feature>
<feature type="active site" description="Nucleophile; for glutamine hydrolysis" evidence="1">
    <location>
        <position position="382"/>
    </location>
</feature>
<feature type="active site" evidence="1">
    <location>
        <position position="509"/>
    </location>
</feature>
<feature type="active site" evidence="1">
    <location>
        <position position="511"/>
    </location>
</feature>
<feature type="binding site" evidence="1">
    <location>
        <position position="14"/>
    </location>
    <ligand>
        <name>CTP</name>
        <dbReference type="ChEBI" id="CHEBI:37563"/>
        <note>allosteric inhibitor</note>
    </ligand>
</feature>
<feature type="binding site" evidence="1">
    <location>
        <position position="14"/>
    </location>
    <ligand>
        <name>UTP</name>
        <dbReference type="ChEBI" id="CHEBI:46398"/>
    </ligand>
</feature>
<feature type="binding site" evidence="1">
    <location>
        <begin position="15"/>
        <end position="20"/>
    </location>
    <ligand>
        <name>ATP</name>
        <dbReference type="ChEBI" id="CHEBI:30616"/>
    </ligand>
</feature>
<feature type="binding site" evidence="1">
    <location>
        <position position="55"/>
    </location>
    <ligand>
        <name>L-glutamine</name>
        <dbReference type="ChEBI" id="CHEBI:58359"/>
    </ligand>
</feature>
<feature type="binding site" evidence="1">
    <location>
        <position position="72"/>
    </location>
    <ligand>
        <name>ATP</name>
        <dbReference type="ChEBI" id="CHEBI:30616"/>
    </ligand>
</feature>
<feature type="binding site" evidence="1">
    <location>
        <position position="72"/>
    </location>
    <ligand>
        <name>Mg(2+)</name>
        <dbReference type="ChEBI" id="CHEBI:18420"/>
    </ligand>
</feature>
<feature type="binding site" evidence="1">
    <location>
        <position position="142"/>
    </location>
    <ligand>
        <name>Mg(2+)</name>
        <dbReference type="ChEBI" id="CHEBI:18420"/>
    </ligand>
</feature>
<feature type="binding site" evidence="1">
    <location>
        <begin position="149"/>
        <end position="151"/>
    </location>
    <ligand>
        <name>CTP</name>
        <dbReference type="ChEBI" id="CHEBI:37563"/>
        <note>allosteric inhibitor</note>
    </ligand>
</feature>
<feature type="binding site" evidence="1">
    <location>
        <begin position="189"/>
        <end position="194"/>
    </location>
    <ligand>
        <name>CTP</name>
        <dbReference type="ChEBI" id="CHEBI:37563"/>
        <note>allosteric inhibitor</note>
    </ligand>
</feature>
<feature type="binding site" evidence="1">
    <location>
        <begin position="189"/>
        <end position="194"/>
    </location>
    <ligand>
        <name>UTP</name>
        <dbReference type="ChEBI" id="CHEBI:46398"/>
    </ligand>
</feature>
<feature type="binding site" evidence="1">
    <location>
        <position position="225"/>
    </location>
    <ligand>
        <name>CTP</name>
        <dbReference type="ChEBI" id="CHEBI:37563"/>
        <note>allosteric inhibitor</note>
    </ligand>
</feature>
<feature type="binding site" evidence="1">
    <location>
        <position position="225"/>
    </location>
    <ligand>
        <name>UTP</name>
        <dbReference type="ChEBI" id="CHEBI:46398"/>
    </ligand>
</feature>
<feature type="binding site" evidence="1">
    <location>
        <position position="355"/>
    </location>
    <ligand>
        <name>L-glutamine</name>
        <dbReference type="ChEBI" id="CHEBI:58359"/>
    </ligand>
</feature>
<feature type="binding site" evidence="1">
    <location>
        <begin position="383"/>
        <end position="386"/>
    </location>
    <ligand>
        <name>L-glutamine</name>
        <dbReference type="ChEBI" id="CHEBI:58359"/>
    </ligand>
</feature>
<feature type="binding site" evidence="1">
    <location>
        <position position="406"/>
    </location>
    <ligand>
        <name>L-glutamine</name>
        <dbReference type="ChEBI" id="CHEBI:58359"/>
    </ligand>
</feature>
<feature type="binding site" evidence="1">
    <location>
        <position position="464"/>
    </location>
    <ligand>
        <name>L-glutamine</name>
        <dbReference type="ChEBI" id="CHEBI:58359"/>
    </ligand>
</feature>
<organism>
    <name type="scientific">Streptococcus sanguinis (strain SK36)</name>
    <dbReference type="NCBI Taxonomy" id="388919"/>
    <lineage>
        <taxon>Bacteria</taxon>
        <taxon>Bacillati</taxon>
        <taxon>Bacillota</taxon>
        <taxon>Bacilli</taxon>
        <taxon>Lactobacillales</taxon>
        <taxon>Streptococcaceae</taxon>
        <taxon>Streptococcus</taxon>
    </lineage>
</organism>
<evidence type="ECO:0000255" key="1">
    <source>
        <dbReference type="HAMAP-Rule" id="MF_01227"/>
    </source>
</evidence>
<protein>
    <recommendedName>
        <fullName evidence="1">CTP synthase</fullName>
        <ecNumber evidence="1">6.3.4.2</ecNumber>
    </recommendedName>
    <alternativeName>
        <fullName evidence="1">Cytidine 5'-triphosphate synthase</fullName>
    </alternativeName>
    <alternativeName>
        <fullName evidence="1">Cytidine triphosphate synthetase</fullName>
        <shortName evidence="1">CTP synthetase</shortName>
        <shortName evidence="1">CTPS</shortName>
    </alternativeName>
    <alternativeName>
        <fullName evidence="1">UTP--ammonia ligase</fullName>
    </alternativeName>
</protein>